<comment type="function">
    <text evidence="1">Catalyzes the stereoinversion of LL-2,6-diaminopimelate (L,L-DAP) to meso-diaminopimelate (meso-DAP), a precursor of L-lysine and an essential component of the bacterial peptidoglycan.</text>
</comment>
<comment type="catalytic activity">
    <reaction evidence="1">
        <text>(2S,6S)-2,6-diaminopimelate = meso-2,6-diaminopimelate</text>
        <dbReference type="Rhea" id="RHEA:15393"/>
        <dbReference type="ChEBI" id="CHEBI:57609"/>
        <dbReference type="ChEBI" id="CHEBI:57791"/>
        <dbReference type="EC" id="5.1.1.7"/>
    </reaction>
</comment>
<comment type="pathway">
    <text evidence="1">Amino-acid biosynthesis; L-lysine biosynthesis via DAP pathway; DL-2,6-diaminopimelate from LL-2,6-diaminopimelate: step 1/1.</text>
</comment>
<comment type="subunit">
    <text evidence="1">Homodimer.</text>
</comment>
<comment type="subcellular location">
    <subcellularLocation>
        <location evidence="1">Cytoplasm</location>
    </subcellularLocation>
</comment>
<comment type="similarity">
    <text evidence="1">Belongs to the diaminopimelate epimerase family.</text>
</comment>
<feature type="chain" id="PRO_1000204057" description="Diaminopimelate epimerase">
    <location>
        <begin position="1"/>
        <end position="283"/>
    </location>
</feature>
<feature type="active site" description="Proton donor" evidence="1">
    <location>
        <position position="76"/>
    </location>
</feature>
<feature type="active site" description="Proton acceptor" evidence="1">
    <location>
        <position position="226"/>
    </location>
</feature>
<feature type="binding site" evidence="1">
    <location>
        <position position="13"/>
    </location>
    <ligand>
        <name>substrate</name>
    </ligand>
</feature>
<feature type="binding site" evidence="1">
    <location>
        <position position="67"/>
    </location>
    <ligand>
        <name>substrate</name>
    </ligand>
</feature>
<feature type="binding site" evidence="1">
    <location>
        <begin position="77"/>
        <end position="78"/>
    </location>
    <ligand>
        <name>substrate</name>
    </ligand>
</feature>
<feature type="binding site" evidence="1">
    <location>
        <position position="166"/>
    </location>
    <ligand>
        <name>substrate</name>
    </ligand>
</feature>
<feature type="binding site" evidence="1">
    <location>
        <position position="199"/>
    </location>
    <ligand>
        <name>substrate</name>
    </ligand>
</feature>
<feature type="binding site" evidence="1">
    <location>
        <begin position="217"/>
        <end position="218"/>
    </location>
    <ligand>
        <name>substrate</name>
    </ligand>
</feature>
<feature type="binding site" evidence="1">
    <location>
        <begin position="227"/>
        <end position="228"/>
    </location>
    <ligand>
        <name>substrate</name>
    </ligand>
</feature>
<feature type="site" description="Could be important to modulate the pK values of the two catalytic cysteine residues" evidence="1">
    <location>
        <position position="168"/>
    </location>
</feature>
<feature type="site" description="Could be important to modulate the pK values of the two catalytic cysteine residues" evidence="1">
    <location>
        <position position="217"/>
    </location>
</feature>
<dbReference type="EC" id="5.1.1.7" evidence="1"/>
<dbReference type="EMBL" id="CP001087">
    <property type="protein sequence ID" value="ACN16826.1"/>
    <property type="molecule type" value="Genomic_DNA"/>
</dbReference>
<dbReference type="RefSeq" id="WP_015905572.1">
    <property type="nucleotide sequence ID" value="NC_012108.1"/>
</dbReference>
<dbReference type="SMR" id="C0QAP3"/>
<dbReference type="STRING" id="177437.HRM2_37680"/>
<dbReference type="KEGG" id="dat:HRM2_37680"/>
<dbReference type="eggNOG" id="COG0253">
    <property type="taxonomic scope" value="Bacteria"/>
</dbReference>
<dbReference type="HOGENOM" id="CLU_053306_3_0_7"/>
<dbReference type="OrthoDB" id="9805408at2"/>
<dbReference type="UniPathway" id="UPA00034">
    <property type="reaction ID" value="UER00025"/>
</dbReference>
<dbReference type="Proteomes" id="UP000000442">
    <property type="component" value="Chromosome"/>
</dbReference>
<dbReference type="GO" id="GO:0005829">
    <property type="term" value="C:cytosol"/>
    <property type="evidence" value="ECO:0007669"/>
    <property type="project" value="TreeGrafter"/>
</dbReference>
<dbReference type="GO" id="GO:0008837">
    <property type="term" value="F:diaminopimelate epimerase activity"/>
    <property type="evidence" value="ECO:0007669"/>
    <property type="project" value="UniProtKB-UniRule"/>
</dbReference>
<dbReference type="GO" id="GO:0009089">
    <property type="term" value="P:lysine biosynthetic process via diaminopimelate"/>
    <property type="evidence" value="ECO:0007669"/>
    <property type="project" value="UniProtKB-UniRule"/>
</dbReference>
<dbReference type="Gene3D" id="3.10.310.10">
    <property type="entry name" value="Diaminopimelate Epimerase, Chain A, domain 1"/>
    <property type="match status" value="2"/>
</dbReference>
<dbReference type="HAMAP" id="MF_00197">
    <property type="entry name" value="DAP_epimerase"/>
    <property type="match status" value="1"/>
</dbReference>
<dbReference type="InterPro" id="IPR018510">
    <property type="entry name" value="DAP_epimerase_AS"/>
</dbReference>
<dbReference type="InterPro" id="IPR001653">
    <property type="entry name" value="DAP_epimerase_DapF"/>
</dbReference>
<dbReference type="NCBIfam" id="TIGR00652">
    <property type="entry name" value="DapF"/>
    <property type="match status" value="1"/>
</dbReference>
<dbReference type="PANTHER" id="PTHR31689:SF0">
    <property type="entry name" value="DIAMINOPIMELATE EPIMERASE"/>
    <property type="match status" value="1"/>
</dbReference>
<dbReference type="PANTHER" id="PTHR31689">
    <property type="entry name" value="DIAMINOPIMELATE EPIMERASE, CHLOROPLASTIC"/>
    <property type="match status" value="1"/>
</dbReference>
<dbReference type="Pfam" id="PF01678">
    <property type="entry name" value="DAP_epimerase"/>
    <property type="match status" value="2"/>
</dbReference>
<dbReference type="SUPFAM" id="SSF54506">
    <property type="entry name" value="Diaminopimelate epimerase-like"/>
    <property type="match status" value="2"/>
</dbReference>
<dbReference type="PROSITE" id="PS01326">
    <property type="entry name" value="DAP_EPIMERASE"/>
    <property type="match status" value="1"/>
</dbReference>
<name>DAPF_DESAH</name>
<accession>C0QAP3</accession>
<proteinExistence type="inferred from homology"/>
<reference key="1">
    <citation type="journal article" date="2009" name="Environ. Microbiol.">
        <title>Genome sequence of Desulfobacterium autotrophicum HRM2, a marine sulfate reducer oxidizing organic carbon completely to carbon dioxide.</title>
        <authorList>
            <person name="Strittmatter A.W."/>
            <person name="Liesegang H."/>
            <person name="Rabus R."/>
            <person name="Decker I."/>
            <person name="Amann J."/>
            <person name="Andres S."/>
            <person name="Henne A."/>
            <person name="Fricke W.F."/>
            <person name="Martinez-Arias R."/>
            <person name="Bartels D."/>
            <person name="Goesmann A."/>
            <person name="Krause L."/>
            <person name="Puehler A."/>
            <person name="Klenk H.P."/>
            <person name="Richter M."/>
            <person name="Schuler M."/>
            <person name="Gloeckner F.O."/>
            <person name="Meyerdierks A."/>
            <person name="Gottschalk G."/>
            <person name="Amann R."/>
        </authorList>
    </citation>
    <scope>NUCLEOTIDE SEQUENCE [LARGE SCALE GENOMIC DNA]</scope>
    <source>
        <strain>ATCC 43914 / DSM 3382 / VKM B-1955 / HRM2</strain>
    </source>
</reference>
<evidence type="ECO:0000255" key="1">
    <source>
        <dbReference type="HAMAP-Rule" id="MF_00197"/>
    </source>
</evidence>
<keyword id="KW-0028">Amino-acid biosynthesis</keyword>
<keyword id="KW-0963">Cytoplasm</keyword>
<keyword id="KW-0413">Isomerase</keyword>
<keyword id="KW-0457">Lysine biosynthesis</keyword>
<keyword id="KW-1185">Reference proteome</keyword>
<organism>
    <name type="scientific">Desulforapulum autotrophicum (strain ATCC 43914 / DSM 3382 / VKM B-1955 / HRM2)</name>
    <name type="common">Desulfobacterium autotrophicum</name>
    <dbReference type="NCBI Taxonomy" id="177437"/>
    <lineage>
        <taxon>Bacteria</taxon>
        <taxon>Pseudomonadati</taxon>
        <taxon>Thermodesulfobacteriota</taxon>
        <taxon>Desulfobacteria</taxon>
        <taxon>Desulfobacterales</taxon>
        <taxon>Desulfobacteraceae</taxon>
        <taxon>Desulforapulum</taxon>
    </lineage>
</organism>
<gene>
    <name evidence="1" type="primary">dapF</name>
    <name type="ordered locus">HRM2_37680</name>
</gene>
<protein>
    <recommendedName>
        <fullName evidence="1">Diaminopimelate epimerase</fullName>
        <shortName evidence="1">DAP epimerase</shortName>
        <ecNumber evidence="1">5.1.1.7</ecNumber>
    </recommendedName>
    <alternativeName>
        <fullName evidence="1">PLP-independent amino acid racemase</fullName>
    </alternativeName>
</protein>
<sequence>MELNFTKMEGLGNDFVMLDDRNGAIVQTVPYPVLAKKLCSRRFGVGGDGIIIIIDSETADVGFKIFNPDGSEPEMCGNGMRCFAKLVFEQGIVTKQRFTVETLAGTIIPEILLSDTRQVEAICVDMGEPILEPDRIPFKCNRQRAVNEQIQVKGETVSITAVSMGNPHAVIFVDDVKKIDLENLGRAIETHELFPAKTNVEFVTVLNDQELVMRVWERGAGETLACGTGASAVLVAASLNGLTRETALVHLAGGDLSIHWDQQSNHLFKTGPATHVFTGRIKI</sequence>